<protein>
    <recommendedName>
        <fullName evidence="1">Protoheme IX farnesyltransferase</fullName>
        <ecNumber evidence="1">2.5.1.141</ecNumber>
    </recommendedName>
    <alternativeName>
        <fullName evidence="1">Heme B farnesyltransferase</fullName>
    </alternativeName>
    <alternativeName>
        <fullName evidence="1">Heme O synthase</fullName>
    </alternativeName>
</protein>
<sequence length="295" mass="32275">MFKQYLQVTKPGIIFGNLISVIGGFLLASKGSIDYTLFASTLVGVSLVVASGCVFNNYIDMDIDRKMERTKNRVLVKGLISPTVSLVYATLLGIAGFMLLWFGANPLACWLGVMGFVVYVGVYSLYMKRHSVYGTLIGSLSGAAPPVIGYCAVTNEFDSGALILLAIFSLWQMPHSYAIAIFRFKDYQAANIPVLPVVKGISVAKNHITLYIIAFAVATLMLSLGGYAGYKYLVVAAAVSVWWLGMALRGYKVEDDKVWARKLFVFSIVAITSLSVMMSVDFMVPDSHSLLTYVW</sequence>
<comment type="function">
    <text evidence="1">Converts heme B (protoheme IX) to heme O by substitution of the vinyl group on carbon 2 of heme B porphyrin ring with a hydroxyethyl farnesyl side group.</text>
</comment>
<comment type="catalytic activity">
    <reaction evidence="1">
        <text>heme b + (2E,6E)-farnesyl diphosphate + H2O = Fe(II)-heme o + diphosphate</text>
        <dbReference type="Rhea" id="RHEA:28070"/>
        <dbReference type="ChEBI" id="CHEBI:15377"/>
        <dbReference type="ChEBI" id="CHEBI:33019"/>
        <dbReference type="ChEBI" id="CHEBI:60344"/>
        <dbReference type="ChEBI" id="CHEBI:60530"/>
        <dbReference type="ChEBI" id="CHEBI:175763"/>
        <dbReference type="EC" id="2.5.1.141"/>
    </reaction>
</comment>
<comment type="pathway">
    <text evidence="1">Porphyrin-containing compound metabolism; heme O biosynthesis; heme O from protoheme: step 1/1.</text>
</comment>
<comment type="subcellular location">
    <subcellularLocation>
        <location evidence="1">Cell inner membrane</location>
        <topology evidence="1">Multi-pass membrane protein</topology>
    </subcellularLocation>
</comment>
<comment type="miscellaneous">
    <text evidence="1">Carbon 2 of the heme B porphyrin ring is defined according to the Fischer nomenclature.</text>
</comment>
<comment type="similarity">
    <text evidence="1">Belongs to the UbiA prenyltransferase family. Protoheme IX farnesyltransferase subfamily.</text>
</comment>
<feature type="chain" id="PRO_0000345993" description="Protoheme IX farnesyltransferase">
    <location>
        <begin position="1"/>
        <end position="295"/>
    </location>
</feature>
<feature type="transmembrane region" description="Helical" evidence="1">
    <location>
        <begin position="8"/>
        <end position="28"/>
    </location>
</feature>
<feature type="transmembrane region" description="Helical" evidence="1">
    <location>
        <begin position="35"/>
        <end position="55"/>
    </location>
</feature>
<feature type="transmembrane region" description="Helical" evidence="1">
    <location>
        <begin position="84"/>
        <end position="104"/>
    </location>
</feature>
<feature type="transmembrane region" description="Helical" evidence="1">
    <location>
        <begin position="107"/>
        <end position="127"/>
    </location>
</feature>
<feature type="transmembrane region" description="Helical" evidence="1">
    <location>
        <begin position="132"/>
        <end position="152"/>
    </location>
</feature>
<feature type="transmembrane region" description="Helical" evidence="1">
    <location>
        <begin position="162"/>
        <end position="182"/>
    </location>
</feature>
<feature type="transmembrane region" description="Helical" evidence="1">
    <location>
        <begin position="208"/>
        <end position="228"/>
    </location>
</feature>
<feature type="transmembrane region" description="Helical" evidence="1">
    <location>
        <begin position="233"/>
        <end position="253"/>
    </location>
</feature>
<feature type="transmembrane region" description="Helical" evidence="1">
    <location>
        <begin position="264"/>
        <end position="284"/>
    </location>
</feature>
<evidence type="ECO:0000255" key="1">
    <source>
        <dbReference type="HAMAP-Rule" id="MF_00154"/>
    </source>
</evidence>
<keyword id="KW-0997">Cell inner membrane</keyword>
<keyword id="KW-1003">Cell membrane</keyword>
<keyword id="KW-0350">Heme biosynthesis</keyword>
<keyword id="KW-0472">Membrane</keyword>
<keyword id="KW-0808">Transferase</keyword>
<keyword id="KW-0812">Transmembrane</keyword>
<keyword id="KW-1133">Transmembrane helix</keyword>
<name>CYOE_ENT38</name>
<gene>
    <name evidence="1" type="primary">cyoE</name>
    <name type="ordered locus">Ent638_0895</name>
</gene>
<dbReference type="EC" id="2.5.1.141" evidence="1"/>
<dbReference type="EMBL" id="CP000653">
    <property type="protein sequence ID" value="ABP59579.1"/>
    <property type="molecule type" value="Genomic_DNA"/>
</dbReference>
<dbReference type="RefSeq" id="WP_012016300.1">
    <property type="nucleotide sequence ID" value="NC_009436.1"/>
</dbReference>
<dbReference type="SMR" id="A4W799"/>
<dbReference type="STRING" id="399742.Ent638_0895"/>
<dbReference type="KEGG" id="ent:Ent638_0895"/>
<dbReference type="eggNOG" id="COG0109">
    <property type="taxonomic scope" value="Bacteria"/>
</dbReference>
<dbReference type="HOGENOM" id="CLU_029631_0_0_6"/>
<dbReference type="OrthoDB" id="9814417at2"/>
<dbReference type="UniPathway" id="UPA00834">
    <property type="reaction ID" value="UER00712"/>
</dbReference>
<dbReference type="Proteomes" id="UP000000230">
    <property type="component" value="Chromosome"/>
</dbReference>
<dbReference type="GO" id="GO:0005886">
    <property type="term" value="C:plasma membrane"/>
    <property type="evidence" value="ECO:0007669"/>
    <property type="project" value="UniProtKB-SubCell"/>
</dbReference>
<dbReference type="GO" id="GO:0008495">
    <property type="term" value="F:protoheme IX farnesyltransferase activity"/>
    <property type="evidence" value="ECO:0007669"/>
    <property type="project" value="UniProtKB-UniRule"/>
</dbReference>
<dbReference type="GO" id="GO:0048034">
    <property type="term" value="P:heme O biosynthetic process"/>
    <property type="evidence" value="ECO:0007669"/>
    <property type="project" value="UniProtKB-UniRule"/>
</dbReference>
<dbReference type="CDD" id="cd13957">
    <property type="entry name" value="PT_UbiA_Cox10"/>
    <property type="match status" value="1"/>
</dbReference>
<dbReference type="FunFam" id="1.10.357.140:FF:000001">
    <property type="entry name" value="Protoheme IX farnesyltransferase"/>
    <property type="match status" value="1"/>
</dbReference>
<dbReference type="Gene3D" id="1.10.357.140">
    <property type="entry name" value="UbiA prenyltransferase"/>
    <property type="match status" value="1"/>
</dbReference>
<dbReference type="HAMAP" id="MF_00154">
    <property type="entry name" value="CyoE_CtaB"/>
    <property type="match status" value="1"/>
</dbReference>
<dbReference type="InterPro" id="IPR006369">
    <property type="entry name" value="Protohaem_IX_farnesylTrfase"/>
</dbReference>
<dbReference type="InterPro" id="IPR000537">
    <property type="entry name" value="UbiA_prenyltransferase"/>
</dbReference>
<dbReference type="InterPro" id="IPR030470">
    <property type="entry name" value="UbiA_prenylTrfase_CS"/>
</dbReference>
<dbReference type="InterPro" id="IPR044878">
    <property type="entry name" value="UbiA_sf"/>
</dbReference>
<dbReference type="NCBIfam" id="TIGR01473">
    <property type="entry name" value="cyoE_ctaB"/>
    <property type="match status" value="1"/>
</dbReference>
<dbReference type="NCBIfam" id="NF003348">
    <property type="entry name" value="PRK04375.1-1"/>
    <property type="match status" value="1"/>
</dbReference>
<dbReference type="PANTHER" id="PTHR43448">
    <property type="entry name" value="PROTOHEME IX FARNESYLTRANSFERASE, MITOCHONDRIAL"/>
    <property type="match status" value="1"/>
</dbReference>
<dbReference type="PANTHER" id="PTHR43448:SF2">
    <property type="entry name" value="PROTOHEME IX FARNESYLTRANSFERASE, MITOCHONDRIAL"/>
    <property type="match status" value="1"/>
</dbReference>
<dbReference type="Pfam" id="PF01040">
    <property type="entry name" value="UbiA"/>
    <property type="match status" value="1"/>
</dbReference>
<dbReference type="PROSITE" id="PS00943">
    <property type="entry name" value="UBIA"/>
    <property type="match status" value="1"/>
</dbReference>
<accession>A4W799</accession>
<reference key="1">
    <citation type="journal article" date="2010" name="PLoS Genet.">
        <title>Genome sequence of the plant growth promoting endophytic bacterium Enterobacter sp. 638.</title>
        <authorList>
            <person name="Taghavi S."/>
            <person name="van der Lelie D."/>
            <person name="Hoffman A."/>
            <person name="Zhang Y.B."/>
            <person name="Walla M.D."/>
            <person name="Vangronsveld J."/>
            <person name="Newman L."/>
            <person name="Monchy S."/>
        </authorList>
    </citation>
    <scope>NUCLEOTIDE SEQUENCE [LARGE SCALE GENOMIC DNA]</scope>
    <source>
        <strain>638</strain>
    </source>
</reference>
<proteinExistence type="inferred from homology"/>
<organism>
    <name type="scientific">Enterobacter sp. (strain 638)</name>
    <dbReference type="NCBI Taxonomy" id="399742"/>
    <lineage>
        <taxon>Bacteria</taxon>
        <taxon>Pseudomonadati</taxon>
        <taxon>Pseudomonadota</taxon>
        <taxon>Gammaproteobacteria</taxon>
        <taxon>Enterobacterales</taxon>
        <taxon>Enterobacteriaceae</taxon>
        <taxon>Enterobacter</taxon>
    </lineage>
</organism>